<reference key="1">
    <citation type="journal article" date="2001" name="Nature">
        <title>Genome sequence of enterohaemorrhagic Escherichia coli O157:H7.</title>
        <authorList>
            <person name="Perna N.T."/>
            <person name="Plunkett G. III"/>
            <person name="Burland V."/>
            <person name="Mau B."/>
            <person name="Glasner J.D."/>
            <person name="Rose D.J."/>
            <person name="Mayhew G.F."/>
            <person name="Evans P.S."/>
            <person name="Gregor J."/>
            <person name="Kirkpatrick H.A."/>
            <person name="Posfai G."/>
            <person name="Hackett J."/>
            <person name="Klink S."/>
            <person name="Boutin A."/>
            <person name="Shao Y."/>
            <person name="Miller L."/>
            <person name="Grotbeck E.J."/>
            <person name="Davis N.W."/>
            <person name="Lim A."/>
            <person name="Dimalanta E.T."/>
            <person name="Potamousis K."/>
            <person name="Apodaca J."/>
            <person name="Anantharaman T.S."/>
            <person name="Lin J."/>
            <person name="Yen G."/>
            <person name="Schwartz D.C."/>
            <person name="Welch R.A."/>
            <person name="Blattner F.R."/>
        </authorList>
    </citation>
    <scope>NUCLEOTIDE SEQUENCE [LARGE SCALE GENOMIC DNA]</scope>
    <source>
        <strain>O157:H7 / EDL933 / ATCC 700927 / EHEC</strain>
    </source>
</reference>
<reference key="2">
    <citation type="journal article" date="2001" name="DNA Res.">
        <title>Complete genome sequence of enterohemorrhagic Escherichia coli O157:H7 and genomic comparison with a laboratory strain K-12.</title>
        <authorList>
            <person name="Hayashi T."/>
            <person name="Makino K."/>
            <person name="Ohnishi M."/>
            <person name="Kurokawa K."/>
            <person name="Ishii K."/>
            <person name="Yokoyama K."/>
            <person name="Han C.-G."/>
            <person name="Ohtsubo E."/>
            <person name="Nakayama K."/>
            <person name="Murata T."/>
            <person name="Tanaka M."/>
            <person name="Tobe T."/>
            <person name="Iida T."/>
            <person name="Takami H."/>
            <person name="Honda T."/>
            <person name="Sasakawa C."/>
            <person name="Ogasawara N."/>
            <person name="Yasunaga T."/>
            <person name="Kuhara S."/>
            <person name="Shiba T."/>
            <person name="Hattori M."/>
            <person name="Shinagawa H."/>
        </authorList>
    </citation>
    <scope>NUCLEOTIDE SEQUENCE [LARGE SCALE GENOMIC DNA]</scope>
    <source>
        <strain>O157:H7 / Sakai / RIMD 0509952 / EHEC</strain>
    </source>
</reference>
<keyword id="KW-0285">Flavoprotein</keyword>
<keyword id="KW-0288">FMN</keyword>
<keyword id="KW-0637">Prenyltransferase</keyword>
<keyword id="KW-1185">Reference proteome</keyword>
<keyword id="KW-0808">Transferase</keyword>
<proteinExistence type="inferred from homology"/>
<feature type="chain" id="PRO_0000134951" description="Flavin prenyltransferase UbiX">
    <location>
        <begin position="1"/>
        <end position="189"/>
    </location>
</feature>
<feature type="binding site" evidence="1">
    <location>
        <begin position="10"/>
        <end position="12"/>
    </location>
    <ligand>
        <name>FMN</name>
        <dbReference type="ChEBI" id="CHEBI:58210"/>
    </ligand>
</feature>
<feature type="binding site" evidence="1">
    <location>
        <position position="37"/>
    </location>
    <ligand>
        <name>FMN</name>
        <dbReference type="ChEBI" id="CHEBI:58210"/>
    </ligand>
</feature>
<feature type="binding site" evidence="1">
    <location>
        <begin position="88"/>
        <end position="91"/>
    </location>
    <ligand>
        <name>FMN</name>
        <dbReference type="ChEBI" id="CHEBI:58210"/>
    </ligand>
</feature>
<feature type="binding site" evidence="1">
    <location>
        <position position="123"/>
    </location>
    <ligand>
        <name>FMN</name>
        <dbReference type="ChEBI" id="CHEBI:58210"/>
    </ligand>
</feature>
<feature type="binding site" evidence="1">
    <location>
        <position position="153"/>
    </location>
    <ligand>
        <name>dimethylallyl phosphate</name>
        <dbReference type="ChEBI" id="CHEBI:88052"/>
    </ligand>
</feature>
<feature type="binding site" evidence="1">
    <location>
        <position position="169"/>
    </location>
    <ligand>
        <name>dimethylallyl phosphate</name>
        <dbReference type="ChEBI" id="CHEBI:88052"/>
    </ligand>
</feature>
<accession>P0AG04</accession>
<accession>P09550</accession>
<accession>P77715</accession>
<evidence type="ECO:0000255" key="1">
    <source>
        <dbReference type="HAMAP-Rule" id="MF_01984"/>
    </source>
</evidence>
<sequence length="189" mass="20695">MKRLIVGISGASGAIYGVRLLQVLRDVTDIETHLVMSQAARQTLSLETDFSLREVQALADVTHDARDIAASISSGSFQTLGMVILPCSIKTLSGIVHSYTDGLLTRAADVVLKERRPLVLCVRETPLHLGHLRLMTQAAEIGAVIMPPVPAFYHRPQSLDDVINQTVNRVLDQFAITLPEDLFARWQGA</sequence>
<gene>
    <name evidence="1" type="primary">ubiX</name>
    <name type="ordered locus">Z3573</name>
    <name type="ordered locus">ECs3195</name>
</gene>
<organism>
    <name type="scientific">Escherichia coli O157:H7</name>
    <dbReference type="NCBI Taxonomy" id="83334"/>
    <lineage>
        <taxon>Bacteria</taxon>
        <taxon>Pseudomonadati</taxon>
        <taxon>Pseudomonadota</taxon>
        <taxon>Gammaproteobacteria</taxon>
        <taxon>Enterobacterales</taxon>
        <taxon>Enterobacteriaceae</taxon>
        <taxon>Escherichia</taxon>
    </lineage>
</organism>
<name>UBIX_ECO57</name>
<protein>
    <recommendedName>
        <fullName evidence="1">Flavin prenyltransferase UbiX</fullName>
        <ecNumber evidence="1">2.5.1.129</ecNumber>
    </recommendedName>
</protein>
<comment type="function">
    <text evidence="1">Flavin prenyltransferase that catalyzes the synthesis of the prenylated FMN cofactor (prenyl-FMN) for 4-hydroxy-3-polyprenylbenzoic acid decarboxylase UbiD. The prenyltransferase is metal-independent and links a dimethylallyl moiety from dimethylallyl monophosphate (DMAP) to the flavin N5 and C6 atoms of FMN.</text>
</comment>
<comment type="catalytic activity">
    <reaction evidence="1">
        <text>dimethylallyl phosphate + FMNH2 = prenylated FMNH2 + phosphate</text>
        <dbReference type="Rhea" id="RHEA:37743"/>
        <dbReference type="ChEBI" id="CHEBI:43474"/>
        <dbReference type="ChEBI" id="CHEBI:57618"/>
        <dbReference type="ChEBI" id="CHEBI:87467"/>
        <dbReference type="ChEBI" id="CHEBI:88052"/>
        <dbReference type="EC" id="2.5.1.129"/>
    </reaction>
</comment>
<comment type="pathway">
    <text>Cofactor biosynthesis; ubiquinone biosynthesis.</text>
</comment>
<comment type="similarity">
    <text evidence="1">Belongs to the UbiX/PAD1 family.</text>
</comment>
<dbReference type="EC" id="2.5.1.129" evidence="1"/>
<dbReference type="EMBL" id="AE005174">
    <property type="protein sequence ID" value="AAG57440.1"/>
    <property type="molecule type" value="Genomic_DNA"/>
</dbReference>
<dbReference type="EMBL" id="BA000007">
    <property type="protein sequence ID" value="BAB36618.1"/>
    <property type="molecule type" value="Genomic_DNA"/>
</dbReference>
<dbReference type="PIR" id="C91028">
    <property type="entry name" value="C91028"/>
</dbReference>
<dbReference type="PIR" id="D85872">
    <property type="entry name" value="D85872"/>
</dbReference>
<dbReference type="RefSeq" id="NP_311222.1">
    <property type="nucleotide sequence ID" value="NC_002695.1"/>
</dbReference>
<dbReference type="RefSeq" id="WP_000825700.1">
    <property type="nucleotide sequence ID" value="NZ_VOAI01000001.1"/>
</dbReference>
<dbReference type="SMR" id="P0AG04"/>
<dbReference type="STRING" id="155864.Z3573"/>
<dbReference type="GeneID" id="916903"/>
<dbReference type="KEGG" id="ece:Z3573"/>
<dbReference type="KEGG" id="ecs:ECs_3195"/>
<dbReference type="PATRIC" id="fig|386585.9.peg.3335"/>
<dbReference type="eggNOG" id="COG0163">
    <property type="taxonomic scope" value="Bacteria"/>
</dbReference>
<dbReference type="HOGENOM" id="CLU_074522_0_1_6"/>
<dbReference type="OMA" id="GATHIQD"/>
<dbReference type="UniPathway" id="UPA00232"/>
<dbReference type="Proteomes" id="UP000000558">
    <property type="component" value="Chromosome"/>
</dbReference>
<dbReference type="Proteomes" id="UP000002519">
    <property type="component" value="Chromosome"/>
</dbReference>
<dbReference type="GO" id="GO:0016831">
    <property type="term" value="F:carboxy-lyase activity"/>
    <property type="evidence" value="ECO:0007669"/>
    <property type="project" value="TreeGrafter"/>
</dbReference>
<dbReference type="GO" id="GO:0106141">
    <property type="term" value="F:flavin prenyltransferase activity"/>
    <property type="evidence" value="ECO:0007669"/>
    <property type="project" value="UniProtKB-EC"/>
</dbReference>
<dbReference type="GO" id="GO:0006744">
    <property type="term" value="P:ubiquinone biosynthetic process"/>
    <property type="evidence" value="ECO:0007669"/>
    <property type="project" value="UniProtKB-UniPathway"/>
</dbReference>
<dbReference type="FunFam" id="3.40.50.1950:FF:000001">
    <property type="entry name" value="Flavin prenyltransferase UbiX"/>
    <property type="match status" value="1"/>
</dbReference>
<dbReference type="Gene3D" id="3.40.50.1950">
    <property type="entry name" value="Flavin prenyltransferase-like"/>
    <property type="match status" value="1"/>
</dbReference>
<dbReference type="HAMAP" id="MF_01984">
    <property type="entry name" value="ubiX_pad"/>
    <property type="match status" value="1"/>
</dbReference>
<dbReference type="InterPro" id="IPR036551">
    <property type="entry name" value="Flavin_trans-like"/>
</dbReference>
<dbReference type="InterPro" id="IPR003382">
    <property type="entry name" value="Flavoprotein"/>
</dbReference>
<dbReference type="InterPro" id="IPR004507">
    <property type="entry name" value="UbiX-like"/>
</dbReference>
<dbReference type="NCBIfam" id="NF004685">
    <property type="entry name" value="PRK06029.1"/>
    <property type="match status" value="1"/>
</dbReference>
<dbReference type="NCBIfam" id="TIGR00421">
    <property type="entry name" value="ubiX_pad"/>
    <property type="match status" value="1"/>
</dbReference>
<dbReference type="PANTHER" id="PTHR43374">
    <property type="entry name" value="FLAVIN PRENYLTRANSFERASE"/>
    <property type="match status" value="1"/>
</dbReference>
<dbReference type="PANTHER" id="PTHR43374:SF1">
    <property type="entry name" value="FLAVIN PRENYLTRANSFERASE PAD1, MITOCHONDRIAL"/>
    <property type="match status" value="1"/>
</dbReference>
<dbReference type="Pfam" id="PF02441">
    <property type="entry name" value="Flavoprotein"/>
    <property type="match status" value="1"/>
</dbReference>
<dbReference type="SUPFAM" id="SSF52507">
    <property type="entry name" value="Homo-oligomeric flavin-containing Cys decarboxylases, HFCD"/>
    <property type="match status" value="1"/>
</dbReference>